<keyword id="KW-0456">Lyase</keyword>
<keyword id="KW-1185">Reference proteome</keyword>
<evidence type="ECO:0000255" key="1">
    <source>
        <dbReference type="HAMAP-Rule" id="MF_00549"/>
    </source>
</evidence>
<name>MGSA_ECO27</name>
<protein>
    <recommendedName>
        <fullName evidence="1">Methylglyoxal synthase</fullName>
        <shortName evidence="1">MGS</shortName>
        <ecNumber evidence="1">4.2.3.3</ecNumber>
    </recommendedName>
</protein>
<organism>
    <name type="scientific">Escherichia coli O127:H6 (strain E2348/69 / EPEC)</name>
    <dbReference type="NCBI Taxonomy" id="574521"/>
    <lineage>
        <taxon>Bacteria</taxon>
        <taxon>Pseudomonadati</taxon>
        <taxon>Pseudomonadota</taxon>
        <taxon>Gammaproteobacteria</taxon>
        <taxon>Enterobacterales</taxon>
        <taxon>Enterobacteriaceae</taxon>
        <taxon>Escherichia</taxon>
    </lineage>
</organism>
<gene>
    <name evidence="1" type="primary">mgsA</name>
    <name type="ordered locus">E2348C_0949</name>
</gene>
<feature type="chain" id="PRO_1000146624" description="Methylglyoxal synthase">
    <location>
        <begin position="1"/>
        <end position="152"/>
    </location>
</feature>
<feature type="domain" description="MGS-like" evidence="1">
    <location>
        <begin position="6"/>
        <end position="152"/>
    </location>
</feature>
<feature type="active site" description="Proton donor/acceptor" evidence="1">
    <location>
        <position position="71"/>
    </location>
</feature>
<feature type="binding site" evidence="1">
    <location>
        <position position="19"/>
    </location>
    <ligand>
        <name>substrate</name>
    </ligand>
</feature>
<feature type="binding site" evidence="1">
    <location>
        <position position="23"/>
    </location>
    <ligand>
        <name>substrate</name>
    </ligand>
</feature>
<feature type="binding site" evidence="1">
    <location>
        <begin position="45"/>
        <end position="48"/>
    </location>
    <ligand>
        <name>substrate</name>
    </ligand>
</feature>
<feature type="binding site" evidence="1">
    <location>
        <begin position="65"/>
        <end position="66"/>
    </location>
    <ligand>
        <name>substrate</name>
    </ligand>
</feature>
<feature type="binding site" evidence="1">
    <location>
        <position position="98"/>
    </location>
    <ligand>
        <name>substrate</name>
    </ligand>
</feature>
<reference key="1">
    <citation type="journal article" date="2009" name="J. Bacteriol.">
        <title>Complete genome sequence and comparative genome analysis of enteropathogenic Escherichia coli O127:H6 strain E2348/69.</title>
        <authorList>
            <person name="Iguchi A."/>
            <person name="Thomson N.R."/>
            <person name="Ogura Y."/>
            <person name="Saunders D."/>
            <person name="Ooka T."/>
            <person name="Henderson I.R."/>
            <person name="Harris D."/>
            <person name="Asadulghani M."/>
            <person name="Kurokawa K."/>
            <person name="Dean P."/>
            <person name="Kenny B."/>
            <person name="Quail M.A."/>
            <person name="Thurston S."/>
            <person name="Dougan G."/>
            <person name="Hayashi T."/>
            <person name="Parkhill J."/>
            <person name="Frankel G."/>
        </authorList>
    </citation>
    <scope>NUCLEOTIDE SEQUENCE [LARGE SCALE GENOMIC DNA]</scope>
    <source>
        <strain>E2348/69 / EPEC</strain>
    </source>
</reference>
<sequence>MELTTRTLPSRKHIALVAHDHCKQMLMSWVERHQPLLEQHVLYATGTTGNLISRATGMNVNAMLSGPMGGDQQVGALISEGKIDVLIFFWDPLNAVPHDPDVKALLRLATVWNIPVATNVATADFIIQSPHFNDAVDILIPDYQRYLADRLK</sequence>
<proteinExistence type="inferred from homology"/>
<comment type="function">
    <text evidence="1">Catalyzes the formation of methylglyoxal from dihydroxyacetone phosphate.</text>
</comment>
<comment type="catalytic activity">
    <reaction evidence="1">
        <text>dihydroxyacetone phosphate = methylglyoxal + phosphate</text>
        <dbReference type="Rhea" id="RHEA:17937"/>
        <dbReference type="ChEBI" id="CHEBI:17158"/>
        <dbReference type="ChEBI" id="CHEBI:43474"/>
        <dbReference type="ChEBI" id="CHEBI:57642"/>
        <dbReference type="EC" id="4.2.3.3"/>
    </reaction>
</comment>
<comment type="similarity">
    <text evidence="1">Belongs to the methylglyoxal synthase family.</text>
</comment>
<accession>B7UN42</accession>
<dbReference type="EC" id="4.2.3.3" evidence="1"/>
<dbReference type="EMBL" id="FM180568">
    <property type="protein sequence ID" value="CAS08497.1"/>
    <property type="molecule type" value="Genomic_DNA"/>
</dbReference>
<dbReference type="RefSeq" id="WP_001295939.1">
    <property type="nucleotide sequence ID" value="NC_011601.1"/>
</dbReference>
<dbReference type="SMR" id="B7UN42"/>
<dbReference type="KEGG" id="ecg:E2348C_0949"/>
<dbReference type="HOGENOM" id="CLU_120420_0_1_6"/>
<dbReference type="Proteomes" id="UP000008205">
    <property type="component" value="Chromosome"/>
</dbReference>
<dbReference type="GO" id="GO:0005829">
    <property type="term" value="C:cytosol"/>
    <property type="evidence" value="ECO:0007669"/>
    <property type="project" value="TreeGrafter"/>
</dbReference>
<dbReference type="GO" id="GO:0008929">
    <property type="term" value="F:methylglyoxal synthase activity"/>
    <property type="evidence" value="ECO:0007669"/>
    <property type="project" value="UniProtKB-UniRule"/>
</dbReference>
<dbReference type="GO" id="GO:0019242">
    <property type="term" value="P:methylglyoxal biosynthetic process"/>
    <property type="evidence" value="ECO:0007669"/>
    <property type="project" value="UniProtKB-UniRule"/>
</dbReference>
<dbReference type="CDD" id="cd01422">
    <property type="entry name" value="MGS"/>
    <property type="match status" value="1"/>
</dbReference>
<dbReference type="FunFam" id="3.40.50.1380:FF:000002">
    <property type="entry name" value="Methylglyoxal synthase"/>
    <property type="match status" value="1"/>
</dbReference>
<dbReference type="Gene3D" id="3.40.50.1380">
    <property type="entry name" value="Methylglyoxal synthase-like domain"/>
    <property type="match status" value="1"/>
</dbReference>
<dbReference type="HAMAP" id="MF_00549">
    <property type="entry name" value="Methylglyoxal_synth"/>
    <property type="match status" value="1"/>
</dbReference>
<dbReference type="InterPro" id="IPR004363">
    <property type="entry name" value="Methylgl_synth"/>
</dbReference>
<dbReference type="InterPro" id="IPR018148">
    <property type="entry name" value="Methylglyoxal_synth_AS"/>
</dbReference>
<dbReference type="InterPro" id="IPR011607">
    <property type="entry name" value="MGS-like_dom"/>
</dbReference>
<dbReference type="InterPro" id="IPR036914">
    <property type="entry name" value="MGS-like_dom_sf"/>
</dbReference>
<dbReference type="NCBIfam" id="TIGR00160">
    <property type="entry name" value="MGSA"/>
    <property type="match status" value="1"/>
</dbReference>
<dbReference type="NCBIfam" id="NF003559">
    <property type="entry name" value="PRK05234.1"/>
    <property type="match status" value="1"/>
</dbReference>
<dbReference type="PANTHER" id="PTHR30492">
    <property type="entry name" value="METHYLGLYOXAL SYNTHASE"/>
    <property type="match status" value="1"/>
</dbReference>
<dbReference type="PANTHER" id="PTHR30492:SF0">
    <property type="entry name" value="METHYLGLYOXAL SYNTHASE"/>
    <property type="match status" value="1"/>
</dbReference>
<dbReference type="Pfam" id="PF02142">
    <property type="entry name" value="MGS"/>
    <property type="match status" value="1"/>
</dbReference>
<dbReference type="PIRSF" id="PIRSF006614">
    <property type="entry name" value="Methylglyox_syn"/>
    <property type="match status" value="1"/>
</dbReference>
<dbReference type="SMART" id="SM00851">
    <property type="entry name" value="MGS"/>
    <property type="match status" value="1"/>
</dbReference>
<dbReference type="SUPFAM" id="SSF52335">
    <property type="entry name" value="Methylglyoxal synthase-like"/>
    <property type="match status" value="1"/>
</dbReference>
<dbReference type="PROSITE" id="PS01335">
    <property type="entry name" value="METHYLGLYOXAL_SYNTH"/>
    <property type="match status" value="1"/>
</dbReference>
<dbReference type="PROSITE" id="PS51855">
    <property type="entry name" value="MGS"/>
    <property type="match status" value="1"/>
</dbReference>